<keyword id="KW-0963">Cytoplasm</keyword>
<keyword id="KW-0378">Hydrolase</keyword>
<keyword id="KW-0520">NAD</keyword>
<keyword id="KW-0554">One-carbon metabolism</keyword>
<gene>
    <name evidence="1" type="primary">ahcY</name>
    <name type="ordered locus">Mext_4433</name>
</gene>
<name>SAHH_METEP</name>
<dbReference type="EC" id="3.13.2.1" evidence="1"/>
<dbReference type="EMBL" id="CP000908">
    <property type="protein sequence ID" value="ABY32801.1"/>
    <property type="molecule type" value="Genomic_DNA"/>
</dbReference>
<dbReference type="RefSeq" id="WP_003606448.1">
    <property type="nucleotide sequence ID" value="NC_010172.1"/>
</dbReference>
<dbReference type="SMR" id="A9VYP7"/>
<dbReference type="GeneID" id="72992167"/>
<dbReference type="KEGG" id="mex:Mext_4433"/>
<dbReference type="eggNOG" id="COG0499">
    <property type="taxonomic scope" value="Bacteria"/>
</dbReference>
<dbReference type="HOGENOM" id="CLU_025194_2_1_5"/>
<dbReference type="BioCyc" id="MEXT419610:MEXT_RS22280-MONOMER"/>
<dbReference type="UniPathway" id="UPA00314">
    <property type="reaction ID" value="UER00076"/>
</dbReference>
<dbReference type="GO" id="GO:0005829">
    <property type="term" value="C:cytosol"/>
    <property type="evidence" value="ECO:0007669"/>
    <property type="project" value="TreeGrafter"/>
</dbReference>
<dbReference type="GO" id="GO:0004013">
    <property type="term" value="F:adenosylhomocysteinase activity"/>
    <property type="evidence" value="ECO:0007669"/>
    <property type="project" value="UniProtKB-UniRule"/>
</dbReference>
<dbReference type="GO" id="GO:0071269">
    <property type="term" value="P:L-homocysteine biosynthetic process"/>
    <property type="evidence" value="ECO:0007669"/>
    <property type="project" value="UniProtKB-UniRule"/>
</dbReference>
<dbReference type="GO" id="GO:0006730">
    <property type="term" value="P:one-carbon metabolic process"/>
    <property type="evidence" value="ECO:0007669"/>
    <property type="project" value="UniProtKB-KW"/>
</dbReference>
<dbReference type="GO" id="GO:0033353">
    <property type="term" value="P:S-adenosylmethionine cycle"/>
    <property type="evidence" value="ECO:0007669"/>
    <property type="project" value="TreeGrafter"/>
</dbReference>
<dbReference type="CDD" id="cd00401">
    <property type="entry name" value="SAHH"/>
    <property type="match status" value="1"/>
</dbReference>
<dbReference type="FunFam" id="3.40.50.720:FF:000004">
    <property type="entry name" value="Adenosylhomocysteinase"/>
    <property type="match status" value="1"/>
</dbReference>
<dbReference type="Gene3D" id="3.40.50.1480">
    <property type="entry name" value="Adenosylhomocysteinase-like"/>
    <property type="match status" value="1"/>
</dbReference>
<dbReference type="Gene3D" id="3.40.50.720">
    <property type="entry name" value="NAD(P)-binding Rossmann-like Domain"/>
    <property type="match status" value="1"/>
</dbReference>
<dbReference type="HAMAP" id="MF_00563">
    <property type="entry name" value="AdoHcyase"/>
    <property type="match status" value="1"/>
</dbReference>
<dbReference type="InterPro" id="IPR042172">
    <property type="entry name" value="Adenosylhomocyst_ase-like_sf"/>
</dbReference>
<dbReference type="InterPro" id="IPR000043">
    <property type="entry name" value="Adenosylhomocysteinase-like"/>
</dbReference>
<dbReference type="InterPro" id="IPR015878">
    <property type="entry name" value="Ado_hCys_hydrolase_NAD-bd"/>
</dbReference>
<dbReference type="InterPro" id="IPR036291">
    <property type="entry name" value="NAD(P)-bd_dom_sf"/>
</dbReference>
<dbReference type="InterPro" id="IPR020082">
    <property type="entry name" value="S-Ado-L-homoCys_hydrolase_CS"/>
</dbReference>
<dbReference type="NCBIfam" id="TIGR00936">
    <property type="entry name" value="ahcY"/>
    <property type="match status" value="1"/>
</dbReference>
<dbReference type="NCBIfam" id="NF004005">
    <property type="entry name" value="PRK05476.2-3"/>
    <property type="match status" value="1"/>
</dbReference>
<dbReference type="PANTHER" id="PTHR23420">
    <property type="entry name" value="ADENOSYLHOMOCYSTEINASE"/>
    <property type="match status" value="1"/>
</dbReference>
<dbReference type="PANTHER" id="PTHR23420:SF0">
    <property type="entry name" value="ADENOSYLHOMOCYSTEINASE"/>
    <property type="match status" value="1"/>
</dbReference>
<dbReference type="Pfam" id="PF05221">
    <property type="entry name" value="AdoHcyase"/>
    <property type="match status" value="1"/>
</dbReference>
<dbReference type="Pfam" id="PF00670">
    <property type="entry name" value="AdoHcyase_NAD"/>
    <property type="match status" value="1"/>
</dbReference>
<dbReference type="PIRSF" id="PIRSF001109">
    <property type="entry name" value="Ad_hcy_hydrolase"/>
    <property type="match status" value="1"/>
</dbReference>
<dbReference type="SMART" id="SM00996">
    <property type="entry name" value="AdoHcyase"/>
    <property type="match status" value="1"/>
</dbReference>
<dbReference type="SMART" id="SM00997">
    <property type="entry name" value="AdoHcyase_NAD"/>
    <property type="match status" value="1"/>
</dbReference>
<dbReference type="SUPFAM" id="SSF52283">
    <property type="entry name" value="Formate/glycerate dehydrogenase catalytic domain-like"/>
    <property type="match status" value="1"/>
</dbReference>
<dbReference type="SUPFAM" id="SSF51735">
    <property type="entry name" value="NAD(P)-binding Rossmann-fold domains"/>
    <property type="match status" value="1"/>
</dbReference>
<dbReference type="PROSITE" id="PS00738">
    <property type="entry name" value="ADOHCYASE_1"/>
    <property type="match status" value="1"/>
</dbReference>
<dbReference type="PROSITE" id="PS00739">
    <property type="entry name" value="ADOHCYASE_2"/>
    <property type="match status" value="1"/>
</dbReference>
<reference key="1">
    <citation type="submission" date="2007-12" db="EMBL/GenBank/DDBJ databases">
        <title>Complete sequence of Methylobacterium extorquens PA1.</title>
        <authorList>
            <consortium name="US DOE Joint Genome Institute"/>
            <person name="Copeland A."/>
            <person name="Lucas S."/>
            <person name="Lapidus A."/>
            <person name="Barry K."/>
            <person name="Glavina del Rio T."/>
            <person name="Dalin E."/>
            <person name="Tice H."/>
            <person name="Pitluck S."/>
            <person name="Saunders E."/>
            <person name="Brettin T."/>
            <person name="Bruce D."/>
            <person name="Detter J.C."/>
            <person name="Han C."/>
            <person name="Schmutz J."/>
            <person name="Larimer F."/>
            <person name="Land M."/>
            <person name="Hauser L."/>
            <person name="Kyrpides N."/>
            <person name="Kim E."/>
            <person name="Marx C."/>
            <person name="Richardson P."/>
        </authorList>
    </citation>
    <scope>NUCLEOTIDE SEQUENCE [LARGE SCALE GENOMIC DNA]</scope>
    <source>
        <strain>PA1</strain>
    </source>
</reference>
<protein>
    <recommendedName>
        <fullName evidence="1">Adenosylhomocysteinase</fullName>
        <ecNumber evidence="1">3.13.2.1</ecNumber>
    </recommendedName>
    <alternativeName>
        <fullName evidence="1">S-adenosyl-L-homocysteine hydrolase</fullName>
        <shortName evidence="1">AdoHcyase</shortName>
    </alternativeName>
</protein>
<accession>A9VYP7</accession>
<proteinExistence type="inferred from homology"/>
<feature type="chain" id="PRO_1000129287" description="Adenosylhomocysteinase">
    <location>
        <begin position="1"/>
        <end position="468"/>
    </location>
</feature>
<feature type="binding site" evidence="1">
    <location>
        <position position="57"/>
    </location>
    <ligand>
        <name>substrate</name>
    </ligand>
</feature>
<feature type="binding site" evidence="1">
    <location>
        <position position="132"/>
    </location>
    <ligand>
        <name>substrate</name>
    </ligand>
</feature>
<feature type="binding site" evidence="1">
    <location>
        <position position="194"/>
    </location>
    <ligand>
        <name>substrate</name>
    </ligand>
</feature>
<feature type="binding site" evidence="1">
    <location>
        <begin position="195"/>
        <end position="197"/>
    </location>
    <ligand>
        <name>NAD(+)</name>
        <dbReference type="ChEBI" id="CHEBI:57540"/>
    </ligand>
</feature>
<feature type="binding site" evidence="1">
    <location>
        <position position="224"/>
    </location>
    <ligand>
        <name>substrate</name>
    </ligand>
</feature>
<feature type="binding site" evidence="1">
    <location>
        <position position="228"/>
    </location>
    <ligand>
        <name>substrate</name>
    </ligand>
</feature>
<feature type="binding site" evidence="1">
    <location>
        <position position="229"/>
    </location>
    <ligand>
        <name>NAD(+)</name>
        <dbReference type="ChEBI" id="CHEBI:57540"/>
    </ligand>
</feature>
<feature type="binding site" evidence="1">
    <location>
        <begin position="258"/>
        <end position="263"/>
    </location>
    <ligand>
        <name>NAD(+)</name>
        <dbReference type="ChEBI" id="CHEBI:57540"/>
    </ligand>
</feature>
<feature type="binding site" evidence="1">
    <location>
        <position position="281"/>
    </location>
    <ligand>
        <name>NAD(+)</name>
        <dbReference type="ChEBI" id="CHEBI:57540"/>
    </ligand>
</feature>
<feature type="binding site" evidence="1">
    <location>
        <position position="316"/>
    </location>
    <ligand>
        <name>NAD(+)</name>
        <dbReference type="ChEBI" id="CHEBI:57540"/>
    </ligand>
</feature>
<feature type="binding site" evidence="1">
    <location>
        <begin position="337"/>
        <end position="339"/>
    </location>
    <ligand>
        <name>NAD(+)</name>
        <dbReference type="ChEBI" id="CHEBI:57540"/>
    </ligand>
</feature>
<feature type="binding site" evidence="1">
    <location>
        <position position="382"/>
    </location>
    <ligand>
        <name>NAD(+)</name>
        <dbReference type="ChEBI" id="CHEBI:57540"/>
    </ligand>
</feature>
<comment type="function">
    <text evidence="1">May play a key role in the regulation of the intracellular concentration of adenosylhomocysteine.</text>
</comment>
<comment type="catalytic activity">
    <reaction evidence="1">
        <text>S-adenosyl-L-homocysteine + H2O = L-homocysteine + adenosine</text>
        <dbReference type="Rhea" id="RHEA:21708"/>
        <dbReference type="ChEBI" id="CHEBI:15377"/>
        <dbReference type="ChEBI" id="CHEBI:16335"/>
        <dbReference type="ChEBI" id="CHEBI:57856"/>
        <dbReference type="ChEBI" id="CHEBI:58199"/>
        <dbReference type="EC" id="3.13.2.1"/>
    </reaction>
</comment>
<comment type="cofactor">
    <cofactor evidence="1">
        <name>NAD(+)</name>
        <dbReference type="ChEBI" id="CHEBI:57540"/>
    </cofactor>
    <text evidence="1">Binds 1 NAD(+) per subunit.</text>
</comment>
<comment type="pathway">
    <text evidence="1">Amino-acid biosynthesis; L-homocysteine biosynthesis; L-homocysteine from S-adenosyl-L-homocysteine: step 1/1.</text>
</comment>
<comment type="subcellular location">
    <subcellularLocation>
        <location evidence="1">Cytoplasm</location>
    </subcellularLocation>
</comment>
<comment type="similarity">
    <text evidence="1">Belongs to the adenosylhomocysteinase family.</text>
</comment>
<sequence>MAVANDYIVKDIGLADYGRKEISIAETEMPGLMSTRAEYGASQPLKGAKIAGSLHMTIQTAVLIETLKALGADIRWVSCNIYSTQDHAAAAIAAAGIPVFAVKGETLTEYWDYTSKLFDWHDGGMPNMILDDGGDATMFVHLGLRAENGDTAFLDKPESEEEEVFFALLKKKLAEKPKGWFAGLADSIKGVSEETTTGVHRLYNLAKEGKLLFPAINVNDSVTKSKFDNLYGCKESLVDGIRRGTDVMMAGKVAMVAGFGDVGKGSAASLRNAGCRVLVSEIDPICALQAAMEGYEVVTMEDAAPRADIFVTATGNKDIITIEHMRAMKDRAIVCNIGHFDNEIQVAGLKNLKWQNIKPQVDEIEFADGHRIILLSEGRLVNLGNATGHPSFVMSASFTNQTLAQIELWTNPGKYERQVYTLPKALDEKVAALHLEKIGVKLSKLRPDQAAYIGVSQTGPFKPEHYRY</sequence>
<evidence type="ECO:0000255" key="1">
    <source>
        <dbReference type="HAMAP-Rule" id="MF_00563"/>
    </source>
</evidence>
<organism>
    <name type="scientific">Methylorubrum extorquens (strain PA1)</name>
    <name type="common">Methylobacterium extorquens</name>
    <dbReference type="NCBI Taxonomy" id="419610"/>
    <lineage>
        <taxon>Bacteria</taxon>
        <taxon>Pseudomonadati</taxon>
        <taxon>Pseudomonadota</taxon>
        <taxon>Alphaproteobacteria</taxon>
        <taxon>Hyphomicrobiales</taxon>
        <taxon>Methylobacteriaceae</taxon>
        <taxon>Methylorubrum</taxon>
    </lineage>
</organism>